<feature type="chain" id="PRO_1000146585" description="Probable butyrate kinase">
    <location>
        <begin position="1"/>
        <end position="367"/>
    </location>
</feature>
<dbReference type="EC" id="2.7.2.7" evidence="1"/>
<dbReference type="EMBL" id="CP001598">
    <property type="protein sequence ID" value="ACQ49205.1"/>
    <property type="molecule type" value="Genomic_DNA"/>
</dbReference>
<dbReference type="RefSeq" id="WP_000115773.1">
    <property type="nucleotide sequence ID" value="NC_012659.1"/>
</dbReference>
<dbReference type="SMR" id="C3P7U3"/>
<dbReference type="GeneID" id="45024047"/>
<dbReference type="KEGG" id="bai:BAA_4405"/>
<dbReference type="HOGENOM" id="CLU_048716_0_0_9"/>
<dbReference type="GO" id="GO:0005737">
    <property type="term" value="C:cytoplasm"/>
    <property type="evidence" value="ECO:0007669"/>
    <property type="project" value="UniProtKB-SubCell"/>
</dbReference>
<dbReference type="GO" id="GO:0008776">
    <property type="term" value="F:acetate kinase activity"/>
    <property type="evidence" value="ECO:0007669"/>
    <property type="project" value="TreeGrafter"/>
</dbReference>
<dbReference type="GO" id="GO:0005524">
    <property type="term" value="F:ATP binding"/>
    <property type="evidence" value="ECO:0007669"/>
    <property type="project" value="UniProtKB-KW"/>
</dbReference>
<dbReference type="GO" id="GO:0047761">
    <property type="term" value="F:butyrate kinase activity"/>
    <property type="evidence" value="ECO:0007669"/>
    <property type="project" value="UniProtKB-UniRule"/>
</dbReference>
<dbReference type="GO" id="GO:0006083">
    <property type="term" value="P:acetate metabolic process"/>
    <property type="evidence" value="ECO:0007669"/>
    <property type="project" value="TreeGrafter"/>
</dbReference>
<dbReference type="CDD" id="cd24011">
    <property type="entry name" value="ASKHA_NBD_BK"/>
    <property type="match status" value="1"/>
</dbReference>
<dbReference type="Gene3D" id="3.30.420.40">
    <property type="match status" value="2"/>
</dbReference>
<dbReference type="HAMAP" id="MF_00542">
    <property type="entry name" value="Butyrate_kinase"/>
    <property type="match status" value="1"/>
</dbReference>
<dbReference type="InterPro" id="IPR000890">
    <property type="entry name" value="Aliphatic_acid_kin_short-chain"/>
</dbReference>
<dbReference type="InterPro" id="IPR023865">
    <property type="entry name" value="Aliphatic_acid_kinase_CS"/>
</dbReference>
<dbReference type="InterPro" id="IPR043129">
    <property type="entry name" value="ATPase_NBD"/>
</dbReference>
<dbReference type="InterPro" id="IPR011245">
    <property type="entry name" value="Butyrate_kin"/>
</dbReference>
<dbReference type="NCBIfam" id="TIGR02707">
    <property type="entry name" value="butyr_kinase"/>
    <property type="match status" value="1"/>
</dbReference>
<dbReference type="NCBIfam" id="NF002834">
    <property type="entry name" value="PRK03011.1-5"/>
    <property type="match status" value="1"/>
</dbReference>
<dbReference type="PANTHER" id="PTHR21060">
    <property type="entry name" value="ACETATE KINASE"/>
    <property type="match status" value="1"/>
</dbReference>
<dbReference type="PANTHER" id="PTHR21060:SF3">
    <property type="entry name" value="BUTYRATE KINASE 2-RELATED"/>
    <property type="match status" value="1"/>
</dbReference>
<dbReference type="Pfam" id="PF00871">
    <property type="entry name" value="Acetate_kinase"/>
    <property type="match status" value="1"/>
</dbReference>
<dbReference type="PIRSF" id="PIRSF036458">
    <property type="entry name" value="Butyrate_kin"/>
    <property type="match status" value="1"/>
</dbReference>
<dbReference type="PRINTS" id="PR00471">
    <property type="entry name" value="ACETATEKNASE"/>
</dbReference>
<dbReference type="SUPFAM" id="SSF53067">
    <property type="entry name" value="Actin-like ATPase domain"/>
    <property type="match status" value="2"/>
</dbReference>
<dbReference type="PROSITE" id="PS01075">
    <property type="entry name" value="ACETATE_KINASE_1"/>
    <property type="match status" value="1"/>
</dbReference>
<dbReference type="PROSITE" id="PS01076">
    <property type="entry name" value="ACETATE_KINASE_2"/>
    <property type="match status" value="1"/>
</dbReference>
<protein>
    <recommendedName>
        <fullName evidence="1">Probable butyrate kinase</fullName>
        <shortName evidence="1">BK</shortName>
        <ecNumber evidence="1">2.7.2.7</ecNumber>
    </recommendedName>
    <alternativeName>
        <fullName evidence="1">Branched-chain carboxylic acid kinase</fullName>
    </alternativeName>
</protein>
<accession>C3P7U3</accession>
<gene>
    <name evidence="1" type="primary">buk</name>
    <name type="ordered locus">BAA_4405</name>
</gene>
<keyword id="KW-0067">ATP-binding</keyword>
<keyword id="KW-0963">Cytoplasm</keyword>
<keyword id="KW-0418">Kinase</keyword>
<keyword id="KW-0547">Nucleotide-binding</keyword>
<keyword id="KW-0808">Transferase</keyword>
<name>BUK_BACAA</name>
<sequence length="367" mass="39969">MSVNRILVINPGSTSTKIGVFDNERPVLEETIRHDEEQIGKYKRIIDQYEFRKETILEVLHSHGINISKLNAVCGRGGLLRPIEGGTYTVNDAMLEDLKNGFSGHHASNLGGILAYEIASGLNIPAFIVDPVVVDEMEPIARISGIAGMERKSIFHALNQKAVARKVAEELNHKYEDLNLLVTHMGGGITVGAHKKGKVIDVNNGLNGEGPFSPERAGTVPVGQLVEMCFSGEYYRDEMVKKLVGQGGLVSLIGTNDAIKVEQMVEKGDPEATLIYKAMAYQVAKEIGGASAVLHGKIDAIVLTGGLAYSKILVDEIKERVDWIADVIVHPGEDELQALAEGALRVLREEEAPKEYIVREKETVARG</sequence>
<reference key="1">
    <citation type="submission" date="2009-04" db="EMBL/GenBank/DDBJ databases">
        <title>Genome sequence of Bacillus anthracis A0248.</title>
        <authorList>
            <person name="Dodson R.J."/>
            <person name="Munk A.C."/>
            <person name="Bruce D."/>
            <person name="Detter C."/>
            <person name="Tapia R."/>
            <person name="Sutton G."/>
            <person name="Sims D."/>
            <person name="Brettin T."/>
        </authorList>
    </citation>
    <scope>NUCLEOTIDE SEQUENCE [LARGE SCALE GENOMIC DNA]</scope>
    <source>
        <strain>A0248</strain>
    </source>
</reference>
<organism>
    <name type="scientific">Bacillus anthracis (strain A0248)</name>
    <dbReference type="NCBI Taxonomy" id="592021"/>
    <lineage>
        <taxon>Bacteria</taxon>
        <taxon>Bacillati</taxon>
        <taxon>Bacillota</taxon>
        <taxon>Bacilli</taxon>
        <taxon>Bacillales</taxon>
        <taxon>Bacillaceae</taxon>
        <taxon>Bacillus</taxon>
        <taxon>Bacillus cereus group</taxon>
    </lineage>
</organism>
<comment type="catalytic activity">
    <reaction evidence="1">
        <text>butanoate + ATP = butanoyl phosphate + ADP</text>
        <dbReference type="Rhea" id="RHEA:13585"/>
        <dbReference type="ChEBI" id="CHEBI:17968"/>
        <dbReference type="ChEBI" id="CHEBI:30616"/>
        <dbReference type="ChEBI" id="CHEBI:58079"/>
        <dbReference type="ChEBI" id="CHEBI:456216"/>
        <dbReference type="EC" id="2.7.2.7"/>
    </reaction>
</comment>
<comment type="subcellular location">
    <subcellularLocation>
        <location evidence="1">Cytoplasm</location>
    </subcellularLocation>
</comment>
<comment type="similarity">
    <text evidence="1">Belongs to the acetokinase family.</text>
</comment>
<evidence type="ECO:0000255" key="1">
    <source>
        <dbReference type="HAMAP-Rule" id="MF_00542"/>
    </source>
</evidence>
<proteinExistence type="inferred from homology"/>